<reference key="1">
    <citation type="journal article" date="2005" name="Infect. Immun.">
        <title>Comparative genomic analysis of Chlamydia trachomatis oculotropic and genitotropic strains.</title>
        <authorList>
            <person name="Carlson J.H."/>
            <person name="Porcella S.F."/>
            <person name="McClarty G."/>
            <person name="Caldwell H.D."/>
        </authorList>
    </citation>
    <scope>NUCLEOTIDE SEQUENCE [LARGE SCALE GENOMIC DNA]</scope>
    <source>
        <strain>ATCC VR-571B / DSM 19440 / HAR-13</strain>
    </source>
</reference>
<feature type="chain" id="PRO_0000242916" description="tRNA uridine(34) hydroxylase">
    <location>
        <begin position="1"/>
        <end position="327"/>
    </location>
</feature>
<feature type="domain" description="Rhodanese" evidence="1">
    <location>
        <begin position="122"/>
        <end position="218"/>
    </location>
</feature>
<feature type="active site" description="Cysteine persulfide intermediate" evidence="1">
    <location>
        <position position="178"/>
    </location>
</feature>
<organism>
    <name type="scientific">Chlamydia trachomatis serovar A (strain ATCC VR-571B / DSM 19440 / HAR-13)</name>
    <dbReference type="NCBI Taxonomy" id="315277"/>
    <lineage>
        <taxon>Bacteria</taxon>
        <taxon>Pseudomonadati</taxon>
        <taxon>Chlamydiota</taxon>
        <taxon>Chlamydiia</taxon>
        <taxon>Chlamydiales</taxon>
        <taxon>Chlamydiaceae</taxon>
        <taxon>Chlamydia/Chlamydophila group</taxon>
        <taxon>Chlamydia</taxon>
    </lineage>
</organism>
<name>TRHO_CHLTA</name>
<evidence type="ECO:0000255" key="1">
    <source>
        <dbReference type="HAMAP-Rule" id="MF_00469"/>
    </source>
</evidence>
<dbReference type="EC" id="1.14.-.-" evidence="1"/>
<dbReference type="EMBL" id="CP000051">
    <property type="protein sequence ID" value="AAX50904.1"/>
    <property type="molecule type" value="Genomic_DNA"/>
</dbReference>
<dbReference type="RefSeq" id="WP_009871996.1">
    <property type="nucleotide sequence ID" value="NC_007429.1"/>
</dbReference>
<dbReference type="SMR" id="Q3KL68"/>
<dbReference type="KEGG" id="cta:CTA_0680"/>
<dbReference type="HOGENOM" id="CLU_038878_1_0_0"/>
<dbReference type="Proteomes" id="UP000002532">
    <property type="component" value="Chromosome"/>
</dbReference>
<dbReference type="GO" id="GO:0016705">
    <property type="term" value="F:oxidoreductase activity, acting on paired donors, with incorporation or reduction of molecular oxygen"/>
    <property type="evidence" value="ECO:0007669"/>
    <property type="project" value="UniProtKB-UniRule"/>
</dbReference>
<dbReference type="GO" id="GO:0006400">
    <property type="term" value="P:tRNA modification"/>
    <property type="evidence" value="ECO:0007669"/>
    <property type="project" value="UniProtKB-UniRule"/>
</dbReference>
<dbReference type="CDD" id="cd01518">
    <property type="entry name" value="RHOD_YceA"/>
    <property type="match status" value="1"/>
</dbReference>
<dbReference type="Gene3D" id="3.30.70.100">
    <property type="match status" value="1"/>
</dbReference>
<dbReference type="Gene3D" id="3.40.250.10">
    <property type="entry name" value="Rhodanese-like domain"/>
    <property type="match status" value="1"/>
</dbReference>
<dbReference type="HAMAP" id="MF_00469">
    <property type="entry name" value="TrhO"/>
    <property type="match status" value="1"/>
</dbReference>
<dbReference type="InterPro" id="IPR001763">
    <property type="entry name" value="Rhodanese-like_dom"/>
</dbReference>
<dbReference type="InterPro" id="IPR036873">
    <property type="entry name" value="Rhodanese-like_dom_sf"/>
</dbReference>
<dbReference type="InterPro" id="IPR022111">
    <property type="entry name" value="Rhodanese_C"/>
</dbReference>
<dbReference type="InterPro" id="IPR020936">
    <property type="entry name" value="TrhO"/>
</dbReference>
<dbReference type="InterPro" id="IPR040503">
    <property type="entry name" value="TRHO_N"/>
</dbReference>
<dbReference type="NCBIfam" id="NF001134">
    <property type="entry name" value="PRK00142.1-2"/>
    <property type="match status" value="1"/>
</dbReference>
<dbReference type="NCBIfam" id="NF001135">
    <property type="entry name" value="PRK00142.1-3"/>
    <property type="match status" value="1"/>
</dbReference>
<dbReference type="PANTHER" id="PTHR43268:SF3">
    <property type="entry name" value="RHODANESE-LIKE DOMAIN-CONTAINING PROTEIN 7-RELATED"/>
    <property type="match status" value="1"/>
</dbReference>
<dbReference type="PANTHER" id="PTHR43268">
    <property type="entry name" value="THIOSULFATE SULFURTRANSFERASE/RHODANESE-LIKE DOMAIN-CONTAINING PROTEIN 2"/>
    <property type="match status" value="1"/>
</dbReference>
<dbReference type="Pfam" id="PF00581">
    <property type="entry name" value="Rhodanese"/>
    <property type="match status" value="1"/>
</dbReference>
<dbReference type="Pfam" id="PF12368">
    <property type="entry name" value="Rhodanese_C"/>
    <property type="match status" value="1"/>
</dbReference>
<dbReference type="Pfam" id="PF17773">
    <property type="entry name" value="UPF0176_N"/>
    <property type="match status" value="1"/>
</dbReference>
<dbReference type="SMART" id="SM00450">
    <property type="entry name" value="RHOD"/>
    <property type="match status" value="1"/>
</dbReference>
<dbReference type="SUPFAM" id="SSF52821">
    <property type="entry name" value="Rhodanese/Cell cycle control phosphatase"/>
    <property type="match status" value="1"/>
</dbReference>
<dbReference type="PROSITE" id="PS50206">
    <property type="entry name" value="RHODANESE_3"/>
    <property type="match status" value="1"/>
</dbReference>
<accession>Q3KL68</accession>
<comment type="function">
    <text evidence="1">Catalyzes oxygen-dependent 5-hydroxyuridine (ho5U) modification at position 34 in tRNAs.</text>
</comment>
<comment type="catalytic activity">
    <reaction evidence="1">
        <text>uridine(34) in tRNA + AH2 + O2 = 5-hydroxyuridine(34) in tRNA + A + H2O</text>
        <dbReference type="Rhea" id="RHEA:64224"/>
        <dbReference type="Rhea" id="RHEA-COMP:11727"/>
        <dbReference type="Rhea" id="RHEA-COMP:13381"/>
        <dbReference type="ChEBI" id="CHEBI:13193"/>
        <dbReference type="ChEBI" id="CHEBI:15377"/>
        <dbReference type="ChEBI" id="CHEBI:15379"/>
        <dbReference type="ChEBI" id="CHEBI:17499"/>
        <dbReference type="ChEBI" id="CHEBI:65315"/>
        <dbReference type="ChEBI" id="CHEBI:136877"/>
    </reaction>
</comment>
<comment type="similarity">
    <text evidence="1">Belongs to the TrhO family.</text>
</comment>
<proteinExistence type="inferred from homology"/>
<protein>
    <recommendedName>
        <fullName evidence="1">tRNA uridine(34) hydroxylase</fullName>
        <ecNumber evidence="1">1.14.-.-</ecNumber>
    </recommendedName>
    <alternativeName>
        <fullName evidence="1">tRNA hydroxylation protein O</fullName>
    </alternativeName>
</protein>
<gene>
    <name evidence="1" type="primary">trhO</name>
    <name type="ordered locus">CTA_0680</name>
</gene>
<keyword id="KW-0560">Oxidoreductase</keyword>
<keyword id="KW-0819">tRNA processing</keyword>
<sequence length="327" mass="37694">MEKNYYALAYYYFGPVSNPHEEIALHKQLFKTMDVSCRIYISEEGINGQFSGYQPDAERYMAWLKQRPDFASIKFKIHHIEENIFPRVTVKYRKELVALGCSVDTTKQGKHISPEEWHEKLQENRCLVLDVRNNYEWKIGHFENAVLPDIETFREFPDYADRLAKEHDPAKTPVMMYCTGGIRCELYSALLLEKGFKEVYQLDGGVIAYGLKMGTGKWRGKLFVFDDRMAMPIDEADPNVSPIARCSLCNTDSDTYYNCANTDCNNLFICCESCIATHKGCCSEECSQAPRIRAFSAERGNKPFRRKHLCPTIEQSCCLKEQENQPA</sequence>